<accession>P45872</accession>
<sequence length="356" mass="40233">MLDRLKSIEERYEKLNELLSDPEVVNDPKKLREYSKEQSDIQETVDVYRQYRDASEQLADAKAMLEEKLDAEMRDMVKEEISELQKETETLSERLKVLLIPKDPNDDKNVIMEIRGAAGGEEAALFAGNLYRMYSRYAELQGWKTEVMEANVTGTGGYKEIIFMITGSGAYSKLKYENGAHRVQRVPETESGGRIHTSTATVACLPEAEEVEVDIHEKDIRVDTFASSGPGGQSVNTTMSAVRLTHLPTGVVVSCQDEKSQIKNKEKAMKVLRARIYDKFQQEAQAEYDQTRKSAVGSGDRSERIRTYNFPQNRVTDHRIGLTIQKLDQILEGKLDEVVEALIVEDQASKLQQSEG</sequence>
<name>RF1_BACSU</name>
<comment type="function">
    <text evidence="1">Peptide chain release factor 1 directs the termination of translation in response to the peptide chain termination codons UAG and UAA.</text>
</comment>
<comment type="subcellular location">
    <subcellularLocation>
        <location evidence="1">Cytoplasm</location>
    </subcellularLocation>
</comment>
<comment type="PTM">
    <text evidence="1">Methylated by PrmC. Methylation increases the termination efficiency of RF1 (By similarity).</text>
</comment>
<comment type="similarity">
    <text evidence="2">Belongs to the prokaryotic/mitochondrial release factor family.</text>
</comment>
<evidence type="ECO:0000250" key="1"/>
<evidence type="ECO:0000305" key="2"/>
<gene>
    <name type="primary">prfA</name>
    <name type="ordered locus">BSU37010</name>
</gene>
<reference key="1">
    <citation type="journal article" date="1997" name="Microbiology">
        <title>The Bacillus subtilis genome from gerBC (311 degrees) to licR (334 degrees).</title>
        <authorList>
            <person name="Presecan E."/>
            <person name="Moszer I."/>
            <person name="Boursier L."/>
            <person name="Cruz Ramos H."/>
            <person name="De La Fuente V."/>
            <person name="Hullo M.-F."/>
            <person name="Lelong C."/>
            <person name="Schleich S."/>
            <person name="Sekowska A."/>
            <person name="Song B.H."/>
            <person name="Villani G."/>
            <person name="Kunst F."/>
            <person name="Danchin A."/>
            <person name="Glaser P."/>
        </authorList>
    </citation>
    <scope>NUCLEOTIDE SEQUENCE [GENOMIC DNA]</scope>
    <source>
        <strain>168</strain>
    </source>
</reference>
<reference key="2">
    <citation type="journal article" date="1997" name="Nature">
        <title>The complete genome sequence of the Gram-positive bacterium Bacillus subtilis.</title>
        <authorList>
            <person name="Kunst F."/>
            <person name="Ogasawara N."/>
            <person name="Moszer I."/>
            <person name="Albertini A.M."/>
            <person name="Alloni G."/>
            <person name="Azevedo V."/>
            <person name="Bertero M.G."/>
            <person name="Bessieres P."/>
            <person name="Bolotin A."/>
            <person name="Borchert S."/>
            <person name="Borriss R."/>
            <person name="Boursier L."/>
            <person name="Brans A."/>
            <person name="Braun M."/>
            <person name="Brignell S.C."/>
            <person name="Bron S."/>
            <person name="Brouillet S."/>
            <person name="Bruschi C.V."/>
            <person name="Caldwell B."/>
            <person name="Capuano V."/>
            <person name="Carter N.M."/>
            <person name="Choi S.-K."/>
            <person name="Codani J.-J."/>
            <person name="Connerton I.F."/>
            <person name="Cummings N.J."/>
            <person name="Daniel R.A."/>
            <person name="Denizot F."/>
            <person name="Devine K.M."/>
            <person name="Duesterhoeft A."/>
            <person name="Ehrlich S.D."/>
            <person name="Emmerson P.T."/>
            <person name="Entian K.-D."/>
            <person name="Errington J."/>
            <person name="Fabret C."/>
            <person name="Ferrari E."/>
            <person name="Foulger D."/>
            <person name="Fritz C."/>
            <person name="Fujita M."/>
            <person name="Fujita Y."/>
            <person name="Fuma S."/>
            <person name="Galizzi A."/>
            <person name="Galleron N."/>
            <person name="Ghim S.-Y."/>
            <person name="Glaser P."/>
            <person name="Goffeau A."/>
            <person name="Golightly E.J."/>
            <person name="Grandi G."/>
            <person name="Guiseppi G."/>
            <person name="Guy B.J."/>
            <person name="Haga K."/>
            <person name="Haiech J."/>
            <person name="Harwood C.R."/>
            <person name="Henaut A."/>
            <person name="Hilbert H."/>
            <person name="Holsappel S."/>
            <person name="Hosono S."/>
            <person name="Hullo M.-F."/>
            <person name="Itaya M."/>
            <person name="Jones L.-M."/>
            <person name="Joris B."/>
            <person name="Karamata D."/>
            <person name="Kasahara Y."/>
            <person name="Klaerr-Blanchard M."/>
            <person name="Klein C."/>
            <person name="Kobayashi Y."/>
            <person name="Koetter P."/>
            <person name="Koningstein G."/>
            <person name="Krogh S."/>
            <person name="Kumano M."/>
            <person name="Kurita K."/>
            <person name="Lapidus A."/>
            <person name="Lardinois S."/>
            <person name="Lauber J."/>
            <person name="Lazarevic V."/>
            <person name="Lee S.-M."/>
            <person name="Levine A."/>
            <person name="Liu H."/>
            <person name="Masuda S."/>
            <person name="Mauel C."/>
            <person name="Medigue C."/>
            <person name="Medina N."/>
            <person name="Mellado R.P."/>
            <person name="Mizuno M."/>
            <person name="Moestl D."/>
            <person name="Nakai S."/>
            <person name="Noback M."/>
            <person name="Noone D."/>
            <person name="O'Reilly M."/>
            <person name="Ogawa K."/>
            <person name="Ogiwara A."/>
            <person name="Oudega B."/>
            <person name="Park S.-H."/>
            <person name="Parro V."/>
            <person name="Pohl T.M."/>
            <person name="Portetelle D."/>
            <person name="Porwollik S."/>
            <person name="Prescott A.M."/>
            <person name="Presecan E."/>
            <person name="Pujic P."/>
            <person name="Purnelle B."/>
            <person name="Rapoport G."/>
            <person name="Rey M."/>
            <person name="Reynolds S."/>
            <person name="Rieger M."/>
            <person name="Rivolta C."/>
            <person name="Rocha E."/>
            <person name="Roche B."/>
            <person name="Rose M."/>
            <person name="Sadaie Y."/>
            <person name="Sato T."/>
            <person name="Scanlan E."/>
            <person name="Schleich S."/>
            <person name="Schroeter R."/>
            <person name="Scoffone F."/>
            <person name="Sekiguchi J."/>
            <person name="Sekowska A."/>
            <person name="Seror S.J."/>
            <person name="Serror P."/>
            <person name="Shin B.-S."/>
            <person name="Soldo B."/>
            <person name="Sorokin A."/>
            <person name="Tacconi E."/>
            <person name="Takagi T."/>
            <person name="Takahashi H."/>
            <person name="Takemaru K."/>
            <person name="Takeuchi M."/>
            <person name="Tamakoshi A."/>
            <person name="Tanaka T."/>
            <person name="Terpstra P."/>
            <person name="Tognoni A."/>
            <person name="Tosato V."/>
            <person name="Uchiyama S."/>
            <person name="Vandenbol M."/>
            <person name="Vannier F."/>
            <person name="Vassarotti A."/>
            <person name="Viari A."/>
            <person name="Wambutt R."/>
            <person name="Wedler E."/>
            <person name="Wedler H."/>
            <person name="Weitzenegger T."/>
            <person name="Winters P."/>
            <person name="Wipat A."/>
            <person name="Yamamoto H."/>
            <person name="Yamane K."/>
            <person name="Yasumoto K."/>
            <person name="Yata K."/>
            <person name="Yoshida K."/>
            <person name="Yoshikawa H.-F."/>
            <person name="Zumstein E."/>
            <person name="Yoshikawa H."/>
            <person name="Danchin A."/>
        </authorList>
    </citation>
    <scope>NUCLEOTIDE SEQUENCE [LARGE SCALE GENOMIC DNA]</scope>
    <source>
        <strain>168</strain>
    </source>
</reference>
<keyword id="KW-0963">Cytoplasm</keyword>
<keyword id="KW-0488">Methylation</keyword>
<keyword id="KW-0648">Protein biosynthesis</keyword>
<keyword id="KW-1185">Reference proteome</keyword>
<protein>
    <recommendedName>
        <fullName>Peptide chain release factor 1</fullName>
        <shortName>RF-1</shortName>
    </recommendedName>
</protein>
<dbReference type="EMBL" id="Z49782">
    <property type="protein sequence ID" value="CAA89884.1"/>
    <property type="molecule type" value="Genomic_DNA"/>
</dbReference>
<dbReference type="EMBL" id="AL009126">
    <property type="protein sequence ID" value="CAB15718.1"/>
    <property type="molecule type" value="Genomic_DNA"/>
</dbReference>
<dbReference type="PIR" id="S55437">
    <property type="entry name" value="S55437"/>
</dbReference>
<dbReference type="RefSeq" id="NP_391582.1">
    <property type="nucleotide sequence ID" value="NC_000964.3"/>
</dbReference>
<dbReference type="RefSeq" id="WP_003227645.1">
    <property type="nucleotide sequence ID" value="NZ_OZ025638.1"/>
</dbReference>
<dbReference type="SMR" id="P45872"/>
<dbReference type="FunCoup" id="P45872">
    <property type="interactions" value="652"/>
</dbReference>
<dbReference type="STRING" id="224308.BSU37010"/>
<dbReference type="jPOST" id="P45872"/>
<dbReference type="PaxDb" id="224308-BSU37010"/>
<dbReference type="EnsemblBacteria" id="CAB15718">
    <property type="protein sequence ID" value="CAB15718"/>
    <property type="gene ID" value="BSU_37010"/>
</dbReference>
<dbReference type="GeneID" id="86871680"/>
<dbReference type="GeneID" id="937031"/>
<dbReference type="KEGG" id="bsu:BSU37010"/>
<dbReference type="PATRIC" id="fig|224308.179.peg.4008"/>
<dbReference type="eggNOG" id="COG0216">
    <property type="taxonomic scope" value="Bacteria"/>
</dbReference>
<dbReference type="InParanoid" id="P45872"/>
<dbReference type="OrthoDB" id="9806673at2"/>
<dbReference type="PhylomeDB" id="P45872"/>
<dbReference type="BioCyc" id="BSUB:BSU37010-MONOMER"/>
<dbReference type="PRO" id="PR:P45872"/>
<dbReference type="Proteomes" id="UP000001570">
    <property type="component" value="Chromosome"/>
</dbReference>
<dbReference type="GO" id="GO:0005737">
    <property type="term" value="C:cytoplasm"/>
    <property type="evidence" value="ECO:0007669"/>
    <property type="project" value="UniProtKB-SubCell"/>
</dbReference>
<dbReference type="GO" id="GO:0016149">
    <property type="term" value="F:translation release factor activity, codon specific"/>
    <property type="evidence" value="ECO:0007669"/>
    <property type="project" value="UniProtKB-UniRule"/>
</dbReference>
<dbReference type="FunFam" id="3.30.160.20:FF:000004">
    <property type="entry name" value="Peptide chain release factor 1"/>
    <property type="match status" value="1"/>
</dbReference>
<dbReference type="FunFam" id="3.30.70.1660:FF:000002">
    <property type="entry name" value="Peptide chain release factor 1"/>
    <property type="match status" value="1"/>
</dbReference>
<dbReference type="FunFam" id="3.30.70.1660:FF:000004">
    <property type="entry name" value="Peptide chain release factor 1"/>
    <property type="match status" value="1"/>
</dbReference>
<dbReference type="Gene3D" id="3.30.160.20">
    <property type="match status" value="1"/>
</dbReference>
<dbReference type="Gene3D" id="3.30.70.1660">
    <property type="match status" value="1"/>
</dbReference>
<dbReference type="Gene3D" id="6.10.140.1950">
    <property type="match status" value="1"/>
</dbReference>
<dbReference type="HAMAP" id="MF_00093">
    <property type="entry name" value="Rel_fac_1"/>
    <property type="match status" value="1"/>
</dbReference>
<dbReference type="InterPro" id="IPR005139">
    <property type="entry name" value="PCRF"/>
</dbReference>
<dbReference type="InterPro" id="IPR000352">
    <property type="entry name" value="Pep_chain_release_fac_I"/>
</dbReference>
<dbReference type="InterPro" id="IPR045853">
    <property type="entry name" value="Pep_chain_release_fac_I_sf"/>
</dbReference>
<dbReference type="InterPro" id="IPR050057">
    <property type="entry name" value="Prokaryotic/Mito_RF"/>
</dbReference>
<dbReference type="InterPro" id="IPR004373">
    <property type="entry name" value="RF-1"/>
</dbReference>
<dbReference type="NCBIfam" id="TIGR00019">
    <property type="entry name" value="prfA"/>
    <property type="match status" value="1"/>
</dbReference>
<dbReference type="NCBIfam" id="NF001859">
    <property type="entry name" value="PRK00591.1"/>
    <property type="match status" value="1"/>
</dbReference>
<dbReference type="PANTHER" id="PTHR43804">
    <property type="entry name" value="LD18447P"/>
    <property type="match status" value="1"/>
</dbReference>
<dbReference type="PANTHER" id="PTHR43804:SF7">
    <property type="entry name" value="LD18447P"/>
    <property type="match status" value="1"/>
</dbReference>
<dbReference type="Pfam" id="PF03462">
    <property type="entry name" value="PCRF"/>
    <property type="match status" value="1"/>
</dbReference>
<dbReference type="Pfam" id="PF00472">
    <property type="entry name" value="RF-1"/>
    <property type="match status" value="1"/>
</dbReference>
<dbReference type="SMART" id="SM00937">
    <property type="entry name" value="PCRF"/>
    <property type="match status" value="1"/>
</dbReference>
<dbReference type="SUPFAM" id="SSF75620">
    <property type="entry name" value="Release factor"/>
    <property type="match status" value="1"/>
</dbReference>
<dbReference type="PROSITE" id="PS00745">
    <property type="entry name" value="RF_PROK_I"/>
    <property type="match status" value="1"/>
</dbReference>
<proteinExistence type="inferred from homology"/>
<organism>
    <name type="scientific">Bacillus subtilis (strain 168)</name>
    <dbReference type="NCBI Taxonomy" id="224308"/>
    <lineage>
        <taxon>Bacteria</taxon>
        <taxon>Bacillati</taxon>
        <taxon>Bacillota</taxon>
        <taxon>Bacilli</taxon>
        <taxon>Bacillales</taxon>
        <taxon>Bacillaceae</taxon>
        <taxon>Bacillus</taxon>
    </lineage>
</organism>
<feature type="chain" id="PRO_0000177633" description="Peptide chain release factor 1">
    <location>
        <begin position="1"/>
        <end position="356"/>
    </location>
</feature>
<feature type="modified residue" description="N5-methylglutamine" evidence="1">
    <location>
        <position position="233"/>
    </location>
</feature>